<evidence type="ECO:0000250" key="1"/>
<evidence type="ECO:0000250" key="2">
    <source>
        <dbReference type="UniProtKB" id="Q9CXF4"/>
    </source>
</evidence>
<evidence type="ECO:0000255" key="3">
    <source>
        <dbReference type="PROSITE-ProRule" id="PRU00163"/>
    </source>
</evidence>
<evidence type="ECO:0000269" key="4">
    <source>
    </source>
</evidence>
<evidence type="ECO:0000269" key="5">
    <source>
    </source>
</evidence>
<evidence type="ECO:0000303" key="6">
    <source>
    </source>
</evidence>
<evidence type="ECO:0000303" key="7">
    <source>
    </source>
</evidence>
<evidence type="ECO:0000305" key="8"/>
<evidence type="ECO:0007744" key="9">
    <source>
    </source>
</evidence>
<evidence type="ECO:0007744" key="10">
    <source>
    </source>
</evidence>
<evidence type="ECO:0007744" key="11">
    <source>
    </source>
</evidence>
<evidence type="ECO:0007744" key="12">
    <source>
    </source>
</evidence>
<evidence type="ECO:0007744" key="13">
    <source>
    </source>
</evidence>
<evidence type="ECO:0007744" key="14">
    <source>
    </source>
</evidence>
<evidence type="ECO:0007744" key="15">
    <source>
    </source>
</evidence>
<evidence type="ECO:0007744" key="16">
    <source>
    </source>
</evidence>
<comment type="function">
    <text evidence="1">Acts as a GTPase activating protein for RAB7A. Does not act on RAB4, RAB5 or RAB6 (By similarity).</text>
</comment>
<comment type="subunit">
    <text evidence="4 5">Interacts with non-phosphorylated form of RAB8A; phosphorylation of RAB8A at 'Thr-72' disrupts this interaction (PubMed:26824392). Interacts with ARMC12 (PubMed:33536340).</text>
</comment>
<comment type="interaction">
    <interactant intactId="EBI-1048247">
        <id>Q8TC07</id>
    </interactant>
    <interactant intactId="EBI-749920">
        <id>Q9P1Z2</id>
        <label>CALCOCO1</label>
    </interactant>
    <organismsDiffer>false</organismsDiffer>
    <experiments>3</experiments>
</comment>
<comment type="interaction">
    <interactant intactId="EBI-1048247">
        <id>Q8TC07</id>
    </interactant>
    <interactant intactId="EBI-741977">
        <id>Q96MT8</id>
        <label>CEP63</label>
    </interactant>
    <organismsDiffer>false</organismsDiffer>
    <experiments>5</experiments>
</comment>
<comment type="interaction">
    <interactant intactId="EBI-1048247">
        <id>Q8TC07</id>
    </interactant>
    <interactant intactId="EBI-11522539">
        <id>Q96MT8-3</id>
        <label>CEP63</label>
    </interactant>
    <organismsDiffer>false</organismsDiffer>
    <experiments>3</experiments>
</comment>
<comment type="interaction">
    <interactant intactId="EBI-1048247">
        <id>Q8TC07</id>
    </interactant>
    <interactant intactId="EBI-712001">
        <id>O95166</id>
        <label>GABARAP</label>
    </interactant>
    <organismsDiffer>false</organismsDiffer>
    <experiments>5</experiments>
</comment>
<comment type="interaction">
    <interactant intactId="EBI-1048247">
        <id>Q8TC07</id>
    </interactant>
    <interactant intactId="EBI-746969">
        <id>Q9H0R8</id>
        <label>GABARAPL1</label>
    </interactant>
    <organismsDiffer>false</organismsDiffer>
    <experiments>2</experiments>
</comment>
<comment type="interaction">
    <interactant intactId="EBI-1048247">
        <id>Q8TC07</id>
    </interactant>
    <interactant intactId="EBI-720116">
        <id>P60520</id>
        <label>GABARAPL2</label>
    </interactant>
    <organismsDiffer>false</organismsDiffer>
    <experiments>2</experiments>
</comment>
<comment type="interaction">
    <interactant intactId="EBI-1048247">
        <id>Q8TC07</id>
    </interactant>
    <interactant intactId="EBI-373144">
        <id>Q9GZQ8</id>
        <label>MAP1LC3B</label>
    </interactant>
    <organismsDiffer>false</organismsDiffer>
    <experiments>2</experiments>
</comment>
<comment type="interaction">
    <interactant intactId="EBI-1048247">
        <id>Q8TC07</id>
    </interactant>
    <interactant intactId="EBI-748974">
        <id>Q96CV9</id>
        <label>OPTN</label>
    </interactant>
    <organismsDiffer>false</organismsDiffer>
    <experiments>9</experiments>
</comment>
<comment type="interaction">
    <interactant intactId="EBI-1048247">
        <id>Q8TC07</id>
    </interactant>
    <interactant intactId="EBI-529518">
        <id>Q86VP1</id>
        <label>TAX1BP1</label>
    </interactant>
    <organismsDiffer>false</organismsDiffer>
    <experiments>3</experiments>
</comment>
<comment type="subcellular location">
    <subcellularLocation>
        <location evidence="1">Cytoplasm</location>
    </subcellularLocation>
</comment>
<comment type="alternative products">
    <event type="alternative splicing"/>
    <isoform>
        <id>Q8TC07-1</id>
        <name>1</name>
        <sequence type="displayed"/>
    </isoform>
    <isoform>
        <id>Q8TC07-2</id>
        <name>2</name>
        <sequence type="described" ref="VSP_023094"/>
    </isoform>
    <isoform>
        <id>Q8TC07-3</id>
        <name>3</name>
        <sequence type="described" ref="VSP_046402 VSP_023094"/>
    </isoform>
</comment>
<comment type="tissue specificity">
    <text evidence="5">Ubiquitous.</text>
</comment>
<accession>Q8TC07</accession>
<accession>B4DMT9</accession>
<accession>B9A6L6</accession>
<accession>J3KNI9</accession>
<accession>Q9HA83</accession>
<dbReference type="EMBL" id="AB449901">
    <property type="protein sequence ID" value="BAH16644.1"/>
    <property type="molecule type" value="mRNA"/>
</dbReference>
<dbReference type="EMBL" id="AK022147">
    <property type="protein sequence ID" value="BAB13971.1"/>
    <property type="molecule type" value="mRNA"/>
</dbReference>
<dbReference type="EMBL" id="AK297626">
    <property type="protein sequence ID" value="BAG60001.1"/>
    <property type="molecule type" value="mRNA"/>
</dbReference>
<dbReference type="EMBL" id="AC089984">
    <property type="status" value="NOT_ANNOTATED_CDS"/>
    <property type="molecule type" value="Genomic_DNA"/>
</dbReference>
<dbReference type="EMBL" id="AC090109">
    <property type="status" value="NOT_ANNOTATED_CDS"/>
    <property type="molecule type" value="Genomic_DNA"/>
</dbReference>
<dbReference type="EMBL" id="BC028352">
    <property type="protein sequence ID" value="AAH28352.1"/>
    <property type="molecule type" value="mRNA"/>
</dbReference>
<dbReference type="CCDS" id="CCDS31858.1">
    <molecule id="Q8TC07-1"/>
</dbReference>
<dbReference type="CCDS" id="CCDS53814.1">
    <molecule id="Q8TC07-2"/>
</dbReference>
<dbReference type="RefSeq" id="NP_001139685.2">
    <molecule id="Q8TC07-2"/>
    <property type="nucleotide sequence ID" value="NM_001146213.3"/>
</dbReference>
<dbReference type="RefSeq" id="NP_001139686.1">
    <property type="nucleotide sequence ID" value="NM_001146214.1"/>
</dbReference>
<dbReference type="RefSeq" id="NP_073608.4">
    <molecule id="Q8TC07-1"/>
    <property type="nucleotide sequence ID" value="NM_022771.4"/>
</dbReference>
<dbReference type="SMR" id="Q8TC07"/>
<dbReference type="BioGRID" id="122296">
    <property type="interactions" value="197"/>
</dbReference>
<dbReference type="FunCoup" id="Q8TC07">
    <property type="interactions" value="3099"/>
</dbReference>
<dbReference type="IntAct" id="Q8TC07">
    <property type="interactions" value="108"/>
</dbReference>
<dbReference type="MINT" id="Q8TC07"/>
<dbReference type="STRING" id="9606.ENSP00000448182"/>
<dbReference type="ChEMBL" id="CHEMBL4295905"/>
<dbReference type="GlyCosmos" id="Q8TC07">
    <property type="glycosylation" value="1 site, 1 glycan"/>
</dbReference>
<dbReference type="GlyGen" id="Q8TC07">
    <property type="glycosylation" value="5 sites, 1 O-linked glycan (4 sites)"/>
</dbReference>
<dbReference type="iPTMnet" id="Q8TC07"/>
<dbReference type="PhosphoSitePlus" id="Q8TC07"/>
<dbReference type="BioMuta" id="TBC1D15"/>
<dbReference type="DMDM" id="143811467"/>
<dbReference type="jPOST" id="Q8TC07"/>
<dbReference type="MassIVE" id="Q8TC07"/>
<dbReference type="PaxDb" id="9606-ENSP00000448182"/>
<dbReference type="PeptideAtlas" id="Q8TC07"/>
<dbReference type="ProteomicsDB" id="74067">
    <molecule id="Q8TC07-1"/>
</dbReference>
<dbReference type="ProteomicsDB" id="74068">
    <molecule id="Q8TC07-2"/>
</dbReference>
<dbReference type="Pumba" id="Q8TC07"/>
<dbReference type="Antibodypedia" id="2850">
    <property type="antibodies" value="87 antibodies from 16 providers"/>
</dbReference>
<dbReference type="DNASU" id="64786"/>
<dbReference type="Ensembl" id="ENST00000319106.12">
    <molecule id="Q8TC07-3"/>
    <property type="protein sequence ID" value="ENSP00000318262.6"/>
    <property type="gene ID" value="ENSG00000121749.16"/>
</dbReference>
<dbReference type="Ensembl" id="ENST00000485960.7">
    <molecule id="Q8TC07-2"/>
    <property type="protein sequence ID" value="ENSP00000420678.2"/>
    <property type="gene ID" value="ENSG00000121749.16"/>
</dbReference>
<dbReference type="Ensembl" id="ENST00000550746.5">
    <molecule id="Q8TC07-1"/>
    <property type="protein sequence ID" value="ENSP00000448182.1"/>
    <property type="gene ID" value="ENSG00000121749.16"/>
</dbReference>
<dbReference type="GeneID" id="64786"/>
<dbReference type="KEGG" id="hsa:64786"/>
<dbReference type="MANE-Select" id="ENST00000485960.7">
    <molecule id="Q8TC07-2"/>
    <property type="protein sequence ID" value="ENSP00000420678.2"/>
    <property type="RefSeq nucleotide sequence ID" value="NM_001146213.3"/>
    <property type="RefSeq protein sequence ID" value="NP_001139685.2"/>
</dbReference>
<dbReference type="UCSC" id="uc001swu.4">
    <molecule id="Q8TC07-1"/>
    <property type="organism name" value="human"/>
</dbReference>
<dbReference type="AGR" id="HGNC:25694"/>
<dbReference type="CTD" id="64786"/>
<dbReference type="DisGeNET" id="64786"/>
<dbReference type="GeneCards" id="TBC1D15"/>
<dbReference type="HGNC" id="HGNC:25694">
    <property type="gene designation" value="TBC1D15"/>
</dbReference>
<dbReference type="HPA" id="ENSG00000121749">
    <property type="expression patterns" value="Low tissue specificity"/>
</dbReference>
<dbReference type="MIM" id="612662">
    <property type="type" value="gene"/>
</dbReference>
<dbReference type="neXtProt" id="NX_Q8TC07"/>
<dbReference type="OpenTargets" id="ENSG00000121749"/>
<dbReference type="PharmGKB" id="PA134946839"/>
<dbReference type="VEuPathDB" id="HostDB:ENSG00000121749"/>
<dbReference type="eggNOG" id="KOG2197">
    <property type="taxonomic scope" value="Eukaryota"/>
</dbReference>
<dbReference type="GeneTree" id="ENSGT00940000156429"/>
<dbReference type="HOGENOM" id="CLU_004457_2_2_1"/>
<dbReference type="InParanoid" id="Q8TC07"/>
<dbReference type="OMA" id="YEGLNNP"/>
<dbReference type="OrthoDB" id="10264062at2759"/>
<dbReference type="PAN-GO" id="Q8TC07">
    <property type="GO annotations" value="2 GO annotations based on evolutionary models"/>
</dbReference>
<dbReference type="PhylomeDB" id="Q8TC07"/>
<dbReference type="TreeFam" id="TF314296"/>
<dbReference type="PathwayCommons" id="Q8TC07"/>
<dbReference type="Reactome" id="R-HSA-8854214">
    <property type="pathway name" value="TBC/RABGAPs"/>
</dbReference>
<dbReference type="SignaLink" id="Q8TC07"/>
<dbReference type="BioGRID-ORCS" id="64786">
    <property type="hits" value="11 hits in 1154 CRISPR screens"/>
</dbReference>
<dbReference type="ChiTaRS" id="TBC1D15">
    <property type="organism name" value="human"/>
</dbReference>
<dbReference type="GenomeRNAi" id="64786"/>
<dbReference type="Pharos" id="Q8TC07">
    <property type="development level" value="Tbio"/>
</dbReference>
<dbReference type="PRO" id="PR:Q8TC07"/>
<dbReference type="Proteomes" id="UP000005640">
    <property type="component" value="Chromosome 12"/>
</dbReference>
<dbReference type="RNAct" id="Q8TC07">
    <property type="molecule type" value="protein"/>
</dbReference>
<dbReference type="Bgee" id="ENSG00000121749">
    <property type="expression patterns" value="Expressed in calcaneal tendon and 195 other cell types or tissues"/>
</dbReference>
<dbReference type="ExpressionAtlas" id="Q8TC07">
    <property type="expression patterns" value="baseline and differential"/>
</dbReference>
<dbReference type="GO" id="GO:0005737">
    <property type="term" value="C:cytoplasm"/>
    <property type="evidence" value="ECO:0000250"/>
    <property type="project" value="UniProtKB"/>
</dbReference>
<dbReference type="GO" id="GO:0005576">
    <property type="term" value="C:extracellular region"/>
    <property type="evidence" value="ECO:0007669"/>
    <property type="project" value="Ensembl"/>
</dbReference>
<dbReference type="GO" id="GO:0005096">
    <property type="term" value="F:GTPase activator activity"/>
    <property type="evidence" value="ECO:0000250"/>
    <property type="project" value="UniProtKB"/>
</dbReference>
<dbReference type="GO" id="GO:0043087">
    <property type="term" value="P:regulation of GTPase activity"/>
    <property type="evidence" value="ECO:0000250"/>
    <property type="project" value="UniProtKB"/>
</dbReference>
<dbReference type="FunFam" id="1.10.472.80:FF:000005">
    <property type="entry name" value="TBC1 domain family member 15"/>
    <property type="match status" value="1"/>
</dbReference>
<dbReference type="FunFam" id="1.10.8.270:FF:000005">
    <property type="entry name" value="TBC1 domain family member 15"/>
    <property type="match status" value="1"/>
</dbReference>
<dbReference type="Gene3D" id="1.10.8.270">
    <property type="entry name" value="putative rabgap domain of human tbc1 domain family member 14 like domains"/>
    <property type="match status" value="1"/>
</dbReference>
<dbReference type="Gene3D" id="1.10.472.80">
    <property type="entry name" value="Ypt/Rab-GAP domain of gyp1p, domain 3"/>
    <property type="match status" value="1"/>
</dbReference>
<dbReference type="InterPro" id="IPR000195">
    <property type="entry name" value="Rab-GAP-TBC_dom"/>
</dbReference>
<dbReference type="InterPro" id="IPR035969">
    <property type="entry name" value="Rab-GAP_TBC_sf"/>
</dbReference>
<dbReference type="InterPro" id="IPR021935">
    <property type="entry name" value="SGSM1/2_RBD"/>
</dbReference>
<dbReference type="PANTHER" id="PTHR22957:SF300">
    <property type="entry name" value="TBC1 DOMAIN FAMILY MEMBER 15"/>
    <property type="match status" value="1"/>
</dbReference>
<dbReference type="PANTHER" id="PTHR22957">
    <property type="entry name" value="TBC1 DOMAIN FAMILY MEMBER GTPASE-ACTIVATING PROTEIN"/>
    <property type="match status" value="1"/>
</dbReference>
<dbReference type="Pfam" id="PF12068">
    <property type="entry name" value="PH_RBD"/>
    <property type="match status" value="1"/>
</dbReference>
<dbReference type="Pfam" id="PF00566">
    <property type="entry name" value="RabGAP-TBC"/>
    <property type="match status" value="1"/>
</dbReference>
<dbReference type="SMART" id="SM00164">
    <property type="entry name" value="TBC"/>
    <property type="match status" value="1"/>
</dbReference>
<dbReference type="SUPFAM" id="SSF47923">
    <property type="entry name" value="Ypt/Rab-GAP domain of gyp1p"/>
    <property type="match status" value="2"/>
</dbReference>
<dbReference type="PROSITE" id="PS50086">
    <property type="entry name" value="TBC_RABGAP"/>
    <property type="match status" value="1"/>
</dbReference>
<keyword id="KW-0007">Acetylation</keyword>
<keyword id="KW-0025">Alternative splicing</keyword>
<keyword id="KW-0963">Cytoplasm</keyword>
<keyword id="KW-0343">GTPase activation</keyword>
<keyword id="KW-0597">Phosphoprotein</keyword>
<keyword id="KW-1267">Proteomics identification</keyword>
<keyword id="KW-1185">Reference proteome</keyword>
<reference key="1">
    <citation type="journal article" date="2009" name="Genes Cells">
        <title>Identification and characterization of a novel Tre-2/Bub2/Cdc16 (TBC) protein that possesses Rab3A-GAP activity.</title>
        <authorList>
            <person name="Ishibashi K."/>
            <person name="Kanno E."/>
            <person name="Itoh T."/>
            <person name="Fukuda M."/>
        </authorList>
    </citation>
    <scope>NUCLEOTIDE SEQUENCE [MRNA] (ISOFORM 2)</scope>
    <source>
        <tissue>Brain</tissue>
    </source>
</reference>
<reference key="2">
    <citation type="journal article" date="2004" name="Nat. Genet.">
        <title>Complete sequencing and characterization of 21,243 full-length human cDNAs.</title>
        <authorList>
            <person name="Ota T."/>
            <person name="Suzuki Y."/>
            <person name="Nishikawa T."/>
            <person name="Otsuki T."/>
            <person name="Sugiyama T."/>
            <person name="Irie R."/>
            <person name="Wakamatsu A."/>
            <person name="Hayashi K."/>
            <person name="Sato H."/>
            <person name="Nagai K."/>
            <person name="Kimura K."/>
            <person name="Makita H."/>
            <person name="Sekine M."/>
            <person name="Obayashi M."/>
            <person name="Nishi T."/>
            <person name="Shibahara T."/>
            <person name="Tanaka T."/>
            <person name="Ishii S."/>
            <person name="Yamamoto J."/>
            <person name="Saito K."/>
            <person name="Kawai Y."/>
            <person name="Isono Y."/>
            <person name="Nakamura Y."/>
            <person name="Nagahari K."/>
            <person name="Murakami K."/>
            <person name="Yasuda T."/>
            <person name="Iwayanagi T."/>
            <person name="Wagatsuma M."/>
            <person name="Shiratori A."/>
            <person name="Sudo H."/>
            <person name="Hosoiri T."/>
            <person name="Kaku Y."/>
            <person name="Kodaira H."/>
            <person name="Kondo H."/>
            <person name="Sugawara M."/>
            <person name="Takahashi M."/>
            <person name="Kanda K."/>
            <person name="Yokoi T."/>
            <person name="Furuya T."/>
            <person name="Kikkawa E."/>
            <person name="Omura Y."/>
            <person name="Abe K."/>
            <person name="Kamihara K."/>
            <person name="Katsuta N."/>
            <person name="Sato K."/>
            <person name="Tanikawa M."/>
            <person name="Yamazaki M."/>
            <person name="Ninomiya K."/>
            <person name="Ishibashi T."/>
            <person name="Yamashita H."/>
            <person name="Murakawa K."/>
            <person name="Fujimori K."/>
            <person name="Tanai H."/>
            <person name="Kimata M."/>
            <person name="Watanabe M."/>
            <person name="Hiraoka S."/>
            <person name="Chiba Y."/>
            <person name="Ishida S."/>
            <person name="Ono Y."/>
            <person name="Takiguchi S."/>
            <person name="Watanabe S."/>
            <person name="Yosida M."/>
            <person name="Hotuta T."/>
            <person name="Kusano J."/>
            <person name="Kanehori K."/>
            <person name="Takahashi-Fujii A."/>
            <person name="Hara H."/>
            <person name="Tanase T.-O."/>
            <person name="Nomura Y."/>
            <person name="Togiya S."/>
            <person name="Komai F."/>
            <person name="Hara R."/>
            <person name="Takeuchi K."/>
            <person name="Arita M."/>
            <person name="Imose N."/>
            <person name="Musashino K."/>
            <person name="Yuuki H."/>
            <person name="Oshima A."/>
            <person name="Sasaki N."/>
            <person name="Aotsuka S."/>
            <person name="Yoshikawa Y."/>
            <person name="Matsunawa H."/>
            <person name="Ichihara T."/>
            <person name="Shiohata N."/>
            <person name="Sano S."/>
            <person name="Moriya S."/>
            <person name="Momiyama H."/>
            <person name="Satoh N."/>
            <person name="Takami S."/>
            <person name="Terashima Y."/>
            <person name="Suzuki O."/>
            <person name="Nakagawa S."/>
            <person name="Senoh A."/>
            <person name="Mizoguchi H."/>
            <person name="Goto Y."/>
            <person name="Shimizu F."/>
            <person name="Wakebe H."/>
            <person name="Hishigaki H."/>
            <person name="Watanabe T."/>
            <person name="Sugiyama A."/>
            <person name="Takemoto M."/>
            <person name="Kawakami B."/>
            <person name="Yamazaki M."/>
            <person name="Watanabe K."/>
            <person name="Kumagai A."/>
            <person name="Itakura S."/>
            <person name="Fukuzumi Y."/>
            <person name="Fujimori Y."/>
            <person name="Komiyama M."/>
            <person name="Tashiro H."/>
            <person name="Tanigami A."/>
            <person name="Fujiwara T."/>
            <person name="Ono T."/>
            <person name="Yamada K."/>
            <person name="Fujii Y."/>
            <person name="Ozaki K."/>
            <person name="Hirao M."/>
            <person name="Ohmori Y."/>
            <person name="Kawabata A."/>
            <person name="Hikiji T."/>
            <person name="Kobatake N."/>
            <person name="Inagaki H."/>
            <person name="Ikema Y."/>
            <person name="Okamoto S."/>
            <person name="Okitani R."/>
            <person name="Kawakami T."/>
            <person name="Noguchi S."/>
            <person name="Itoh T."/>
            <person name="Shigeta K."/>
            <person name="Senba T."/>
            <person name="Matsumura K."/>
            <person name="Nakajima Y."/>
            <person name="Mizuno T."/>
            <person name="Morinaga M."/>
            <person name="Sasaki M."/>
            <person name="Togashi T."/>
            <person name="Oyama M."/>
            <person name="Hata H."/>
            <person name="Watanabe M."/>
            <person name="Komatsu T."/>
            <person name="Mizushima-Sugano J."/>
            <person name="Satoh T."/>
            <person name="Shirai Y."/>
            <person name="Takahashi Y."/>
            <person name="Nakagawa K."/>
            <person name="Okumura K."/>
            <person name="Nagase T."/>
            <person name="Nomura N."/>
            <person name="Kikuchi H."/>
            <person name="Masuho Y."/>
            <person name="Yamashita R."/>
            <person name="Nakai K."/>
            <person name="Yada T."/>
            <person name="Nakamura Y."/>
            <person name="Ohara O."/>
            <person name="Isogai T."/>
            <person name="Sugano S."/>
        </authorList>
    </citation>
    <scope>NUCLEOTIDE SEQUENCE [LARGE SCALE MRNA] (ISOFORMS 2 AND 3)</scope>
    <source>
        <tissue>Brain</tissue>
        <tissue>Embryo</tissue>
    </source>
</reference>
<reference key="3">
    <citation type="journal article" date="2006" name="Nature">
        <title>The finished DNA sequence of human chromosome 12.</title>
        <authorList>
            <person name="Scherer S.E."/>
            <person name="Muzny D.M."/>
            <person name="Buhay C.J."/>
            <person name="Chen R."/>
            <person name="Cree A."/>
            <person name="Ding Y."/>
            <person name="Dugan-Rocha S."/>
            <person name="Gill R."/>
            <person name="Gunaratne P."/>
            <person name="Harris R.A."/>
            <person name="Hawes A.C."/>
            <person name="Hernandez J."/>
            <person name="Hodgson A.V."/>
            <person name="Hume J."/>
            <person name="Jackson A."/>
            <person name="Khan Z.M."/>
            <person name="Kovar-Smith C."/>
            <person name="Lewis L.R."/>
            <person name="Lozado R.J."/>
            <person name="Metzker M.L."/>
            <person name="Milosavljevic A."/>
            <person name="Miner G.R."/>
            <person name="Montgomery K.T."/>
            <person name="Morgan M.B."/>
            <person name="Nazareth L.V."/>
            <person name="Scott G."/>
            <person name="Sodergren E."/>
            <person name="Song X.-Z."/>
            <person name="Steffen D."/>
            <person name="Lovering R.C."/>
            <person name="Wheeler D.A."/>
            <person name="Worley K.C."/>
            <person name="Yuan Y."/>
            <person name="Zhang Z."/>
            <person name="Adams C.Q."/>
            <person name="Ansari-Lari M.A."/>
            <person name="Ayele M."/>
            <person name="Brown M.J."/>
            <person name="Chen G."/>
            <person name="Chen Z."/>
            <person name="Clerc-Blankenburg K.P."/>
            <person name="Davis C."/>
            <person name="Delgado O."/>
            <person name="Dinh H.H."/>
            <person name="Draper H."/>
            <person name="Gonzalez-Garay M.L."/>
            <person name="Havlak P."/>
            <person name="Jackson L.R."/>
            <person name="Jacob L.S."/>
            <person name="Kelly S.H."/>
            <person name="Li L."/>
            <person name="Li Z."/>
            <person name="Liu J."/>
            <person name="Liu W."/>
            <person name="Lu J."/>
            <person name="Maheshwari M."/>
            <person name="Nguyen B.-V."/>
            <person name="Okwuonu G.O."/>
            <person name="Pasternak S."/>
            <person name="Perez L.M."/>
            <person name="Plopper F.J.H."/>
            <person name="Santibanez J."/>
            <person name="Shen H."/>
            <person name="Tabor P.E."/>
            <person name="Verduzco D."/>
            <person name="Waldron L."/>
            <person name="Wang Q."/>
            <person name="Williams G.A."/>
            <person name="Zhang J."/>
            <person name="Zhou J."/>
            <person name="Allen C.C."/>
            <person name="Amin A.G."/>
            <person name="Anyalebechi V."/>
            <person name="Bailey M."/>
            <person name="Barbaria J.A."/>
            <person name="Bimage K.E."/>
            <person name="Bryant N.P."/>
            <person name="Burch P.E."/>
            <person name="Burkett C.E."/>
            <person name="Burrell K.L."/>
            <person name="Calderon E."/>
            <person name="Cardenas V."/>
            <person name="Carter K."/>
            <person name="Casias K."/>
            <person name="Cavazos I."/>
            <person name="Cavazos S.R."/>
            <person name="Ceasar H."/>
            <person name="Chacko J."/>
            <person name="Chan S.N."/>
            <person name="Chavez D."/>
            <person name="Christopoulos C."/>
            <person name="Chu J."/>
            <person name="Cockrell R."/>
            <person name="Cox C.D."/>
            <person name="Dang M."/>
            <person name="Dathorne S.R."/>
            <person name="David R."/>
            <person name="Davis C.M."/>
            <person name="Davy-Carroll L."/>
            <person name="Deshazo D.R."/>
            <person name="Donlin J.E."/>
            <person name="D'Souza L."/>
            <person name="Eaves K.A."/>
            <person name="Egan A."/>
            <person name="Emery-Cohen A.J."/>
            <person name="Escotto M."/>
            <person name="Flagg N."/>
            <person name="Forbes L.D."/>
            <person name="Gabisi A.M."/>
            <person name="Garza M."/>
            <person name="Hamilton C."/>
            <person name="Henderson N."/>
            <person name="Hernandez O."/>
            <person name="Hines S."/>
            <person name="Hogues M.E."/>
            <person name="Huang M."/>
            <person name="Idlebird D.G."/>
            <person name="Johnson R."/>
            <person name="Jolivet A."/>
            <person name="Jones S."/>
            <person name="Kagan R."/>
            <person name="King L.M."/>
            <person name="Leal B."/>
            <person name="Lebow H."/>
            <person name="Lee S."/>
            <person name="LeVan J.M."/>
            <person name="Lewis L.C."/>
            <person name="London P."/>
            <person name="Lorensuhewa L.M."/>
            <person name="Loulseged H."/>
            <person name="Lovett D.A."/>
            <person name="Lucier A."/>
            <person name="Lucier R.L."/>
            <person name="Ma J."/>
            <person name="Madu R.C."/>
            <person name="Mapua P."/>
            <person name="Martindale A.D."/>
            <person name="Martinez E."/>
            <person name="Massey E."/>
            <person name="Mawhiney S."/>
            <person name="Meador M.G."/>
            <person name="Mendez S."/>
            <person name="Mercado C."/>
            <person name="Mercado I.C."/>
            <person name="Merritt C.E."/>
            <person name="Miner Z.L."/>
            <person name="Minja E."/>
            <person name="Mitchell T."/>
            <person name="Mohabbat F."/>
            <person name="Mohabbat K."/>
            <person name="Montgomery B."/>
            <person name="Moore N."/>
            <person name="Morris S."/>
            <person name="Munidasa M."/>
            <person name="Ngo R.N."/>
            <person name="Nguyen N.B."/>
            <person name="Nickerson E."/>
            <person name="Nwaokelemeh O.O."/>
            <person name="Nwokenkwo S."/>
            <person name="Obregon M."/>
            <person name="Oguh M."/>
            <person name="Oragunye N."/>
            <person name="Oviedo R.J."/>
            <person name="Parish B.J."/>
            <person name="Parker D.N."/>
            <person name="Parrish J."/>
            <person name="Parks K.L."/>
            <person name="Paul H.A."/>
            <person name="Payton B.A."/>
            <person name="Perez A."/>
            <person name="Perrin W."/>
            <person name="Pickens A."/>
            <person name="Primus E.L."/>
            <person name="Pu L.-L."/>
            <person name="Puazo M."/>
            <person name="Quiles M.M."/>
            <person name="Quiroz J.B."/>
            <person name="Rabata D."/>
            <person name="Reeves K."/>
            <person name="Ruiz S.J."/>
            <person name="Shao H."/>
            <person name="Sisson I."/>
            <person name="Sonaike T."/>
            <person name="Sorelle R.P."/>
            <person name="Sutton A.E."/>
            <person name="Svatek A.F."/>
            <person name="Svetz L.A."/>
            <person name="Tamerisa K.S."/>
            <person name="Taylor T.R."/>
            <person name="Teague B."/>
            <person name="Thomas N."/>
            <person name="Thorn R.D."/>
            <person name="Trejos Z.Y."/>
            <person name="Trevino B.K."/>
            <person name="Ukegbu O.N."/>
            <person name="Urban J.B."/>
            <person name="Vasquez L.I."/>
            <person name="Vera V.A."/>
            <person name="Villasana D.M."/>
            <person name="Wang L."/>
            <person name="Ward-Moore S."/>
            <person name="Warren J.T."/>
            <person name="Wei X."/>
            <person name="White F."/>
            <person name="Williamson A.L."/>
            <person name="Wleczyk R."/>
            <person name="Wooden H.S."/>
            <person name="Wooden S.H."/>
            <person name="Yen J."/>
            <person name="Yoon L."/>
            <person name="Yoon V."/>
            <person name="Zorrilla S.E."/>
            <person name="Nelson D."/>
            <person name="Kucherlapati R."/>
            <person name="Weinstock G."/>
            <person name="Gibbs R.A."/>
        </authorList>
    </citation>
    <scope>NUCLEOTIDE SEQUENCE [LARGE SCALE GENOMIC DNA]</scope>
</reference>
<reference key="4">
    <citation type="journal article" date="2004" name="Genome Res.">
        <title>The status, quality, and expansion of the NIH full-length cDNA project: the Mammalian Gene Collection (MGC).</title>
        <authorList>
            <consortium name="The MGC Project Team"/>
        </authorList>
    </citation>
    <scope>NUCLEOTIDE SEQUENCE [LARGE SCALE MRNA] (ISOFORM 1)</scope>
    <source>
        <tissue>Testis</tissue>
    </source>
</reference>
<reference key="5">
    <citation type="journal article" date="2006" name="Nat. Biotechnol.">
        <title>A probability-based approach for high-throughput protein phosphorylation analysis and site localization.</title>
        <authorList>
            <person name="Beausoleil S.A."/>
            <person name="Villen J."/>
            <person name="Gerber S.A."/>
            <person name="Rush J."/>
            <person name="Gygi S.P."/>
        </authorList>
    </citation>
    <scope>PHOSPHORYLATION [LARGE SCALE ANALYSIS] AT SER-675</scope>
    <scope>IDENTIFICATION BY MASS SPECTROMETRY [LARGE SCALE ANALYSIS]</scope>
    <source>
        <tissue>Cervix carcinoma</tissue>
    </source>
</reference>
<reference key="6">
    <citation type="journal article" date="2008" name="Mol. Cell">
        <title>Kinase-selective enrichment enables quantitative phosphoproteomics of the kinome across the cell cycle.</title>
        <authorList>
            <person name="Daub H."/>
            <person name="Olsen J.V."/>
            <person name="Bairlein M."/>
            <person name="Gnad F."/>
            <person name="Oppermann F.S."/>
            <person name="Korner R."/>
            <person name="Greff Z."/>
            <person name="Keri G."/>
            <person name="Stemmann O."/>
            <person name="Mann M."/>
        </authorList>
    </citation>
    <scope>IDENTIFICATION BY MASS SPECTROMETRY [LARGE SCALE ANALYSIS]</scope>
    <source>
        <tissue>Cervix carcinoma</tissue>
    </source>
</reference>
<reference key="7">
    <citation type="journal article" date="2008" name="Proc. Natl. Acad. Sci. U.S.A.">
        <title>A quantitative atlas of mitotic phosphorylation.</title>
        <authorList>
            <person name="Dephoure N."/>
            <person name="Zhou C."/>
            <person name="Villen J."/>
            <person name="Beausoleil S.A."/>
            <person name="Bakalarski C.E."/>
            <person name="Elledge S.J."/>
            <person name="Gygi S.P."/>
        </authorList>
    </citation>
    <scope>PHOSPHORYLATION [LARGE SCALE ANALYSIS] AT SER-70; SER-675 AND THR-689</scope>
    <scope>IDENTIFICATION BY MASS SPECTROMETRY [LARGE SCALE ANALYSIS]</scope>
    <source>
        <tissue>Cervix carcinoma</tissue>
    </source>
</reference>
<reference key="8">
    <citation type="journal article" date="2009" name="Anal. Chem.">
        <title>Lys-N and trypsin cover complementary parts of the phosphoproteome in a refined SCX-based approach.</title>
        <authorList>
            <person name="Gauci S."/>
            <person name="Helbig A.O."/>
            <person name="Slijper M."/>
            <person name="Krijgsveld J."/>
            <person name="Heck A.J."/>
            <person name="Mohammed S."/>
        </authorList>
    </citation>
    <scope>ACETYLATION [LARGE SCALE ANALYSIS] AT ALA-2</scope>
    <scope>CLEAVAGE OF INITIATOR METHIONINE [LARGE SCALE ANALYSIS]</scope>
    <scope>IDENTIFICATION BY MASS SPECTROMETRY [LARGE SCALE ANALYSIS]</scope>
</reference>
<reference key="9">
    <citation type="journal article" date="2009" name="Sci. Signal.">
        <title>Quantitative phosphoproteomic analysis of T cell receptor signaling reveals system-wide modulation of protein-protein interactions.</title>
        <authorList>
            <person name="Mayya V."/>
            <person name="Lundgren D.H."/>
            <person name="Hwang S.-I."/>
            <person name="Rezaul K."/>
            <person name="Wu L."/>
            <person name="Eng J.K."/>
            <person name="Rodionov V."/>
            <person name="Han D.K."/>
        </authorList>
    </citation>
    <scope>PHOSPHORYLATION [LARGE SCALE ANALYSIS] AT SER-70</scope>
    <scope>PHOSPHORYLATION [LARGE SCALE ANALYSIS] AT SER-205 (ISOFORM 2)</scope>
    <scope>PHOSPHORYLATION [LARGE SCALE ANALYSIS] AT SER-213 (ISOFORM 3)</scope>
    <scope>IDENTIFICATION BY MASS SPECTROMETRY [LARGE SCALE ANALYSIS]</scope>
    <source>
        <tissue>Leukemic T-cell</tissue>
    </source>
</reference>
<reference key="10">
    <citation type="journal article" date="2010" name="Sci. Signal.">
        <title>Quantitative phosphoproteomics reveals widespread full phosphorylation site occupancy during mitosis.</title>
        <authorList>
            <person name="Olsen J.V."/>
            <person name="Vermeulen M."/>
            <person name="Santamaria A."/>
            <person name="Kumar C."/>
            <person name="Miller M.L."/>
            <person name="Jensen L.J."/>
            <person name="Gnad F."/>
            <person name="Cox J."/>
            <person name="Jensen T.S."/>
            <person name="Nigg E.A."/>
            <person name="Brunak S."/>
            <person name="Mann M."/>
        </authorList>
    </citation>
    <scope>PHOSPHORYLATION [LARGE SCALE ANALYSIS] AT SER-675</scope>
    <scope>IDENTIFICATION BY MASS SPECTROMETRY [LARGE SCALE ANALYSIS]</scope>
    <source>
        <tissue>Cervix carcinoma</tissue>
    </source>
</reference>
<reference key="11">
    <citation type="journal article" date="2011" name="BMC Syst. Biol.">
        <title>Initial characterization of the human central proteome.</title>
        <authorList>
            <person name="Burkard T.R."/>
            <person name="Planyavsky M."/>
            <person name="Kaupe I."/>
            <person name="Breitwieser F.P."/>
            <person name="Buerckstuemmer T."/>
            <person name="Bennett K.L."/>
            <person name="Superti-Furga G."/>
            <person name="Colinge J."/>
        </authorList>
    </citation>
    <scope>IDENTIFICATION BY MASS SPECTROMETRY [LARGE SCALE ANALYSIS]</scope>
</reference>
<reference key="12">
    <citation type="journal article" date="2011" name="Sci. Signal.">
        <title>System-wide temporal characterization of the proteome and phosphoproteome of human embryonic stem cell differentiation.</title>
        <authorList>
            <person name="Rigbolt K.T."/>
            <person name="Prokhorova T.A."/>
            <person name="Akimov V."/>
            <person name="Henningsen J."/>
            <person name="Johansen P.T."/>
            <person name="Kratchmarova I."/>
            <person name="Kassem M."/>
            <person name="Mann M."/>
            <person name="Olsen J.V."/>
            <person name="Blagoev B."/>
        </authorList>
    </citation>
    <scope>PHOSPHORYLATION [LARGE SCALE ANALYSIS] AT SER-675</scope>
    <scope>PHOSPHORYLATION [LARGE SCALE ANALYSIS] AT SER-205 (ISOFORM 2)</scope>
    <scope>PHOSPHORYLATION [LARGE SCALE ANALYSIS] AT SER-213 (ISOFORM 3)</scope>
    <scope>IDENTIFICATION BY MASS SPECTROMETRY [LARGE SCALE ANALYSIS]</scope>
</reference>
<reference key="13">
    <citation type="journal article" date="2013" name="J. Proteome Res.">
        <title>Toward a comprehensive characterization of a human cancer cell phosphoproteome.</title>
        <authorList>
            <person name="Zhou H."/>
            <person name="Di Palma S."/>
            <person name="Preisinger C."/>
            <person name="Peng M."/>
            <person name="Polat A.N."/>
            <person name="Heck A.J."/>
            <person name="Mohammed S."/>
        </authorList>
    </citation>
    <scope>PHOSPHORYLATION [LARGE SCALE ANALYSIS] AT SER-70; SER-274 AND SER-675</scope>
    <scope>IDENTIFICATION BY MASS SPECTROMETRY [LARGE SCALE ANALYSIS]</scope>
    <source>
        <tissue>Cervix carcinoma</tissue>
        <tissue>Erythroleukemia</tissue>
    </source>
</reference>
<reference key="14">
    <citation type="journal article" date="2014" name="J. Proteomics">
        <title>An enzyme assisted RP-RPLC approach for in-depth analysis of human liver phosphoproteome.</title>
        <authorList>
            <person name="Bian Y."/>
            <person name="Song C."/>
            <person name="Cheng K."/>
            <person name="Dong M."/>
            <person name="Wang F."/>
            <person name="Huang J."/>
            <person name="Sun D."/>
            <person name="Wang L."/>
            <person name="Ye M."/>
            <person name="Zou H."/>
        </authorList>
    </citation>
    <scope>PHOSPHORYLATION [LARGE SCALE ANALYSIS] AT SER-23; SER-640 AND SER-675</scope>
    <scope>IDENTIFICATION BY MASS SPECTROMETRY [LARGE SCALE ANALYSIS]</scope>
    <source>
        <tissue>Liver</tissue>
    </source>
</reference>
<reference key="15">
    <citation type="journal article" date="2016" name="Elife">
        <title>Phosphoproteomics reveals that Parkinson's disease kinase LRRK2 regulates a subset of Rab GTPases.</title>
        <authorList>
            <person name="Steger M."/>
            <person name="Tonelli F."/>
            <person name="Ito G."/>
            <person name="Davies P."/>
            <person name="Trost M."/>
            <person name="Vetter M."/>
            <person name="Wachter S."/>
            <person name="Lorentzen E."/>
            <person name="Duddy G."/>
            <person name="Wilson S."/>
            <person name="Baptista M.A."/>
            <person name="Fiske B.K."/>
            <person name="Fell M.J."/>
            <person name="Morrow J.A."/>
            <person name="Reith A.D."/>
            <person name="Alessi D.R."/>
            <person name="Mann M."/>
        </authorList>
    </citation>
    <scope>IDENTIFICATION BY MASS SPECTROMETRY</scope>
    <scope>INTERACTION WITH RAB8A</scope>
</reference>
<reference key="16">
    <citation type="journal article" date="2021" name="Proc. Natl. Acad. Sci. U.S.A.">
        <title>ARMC12 regulates spatiotemporal mitochondrial dynamics during spermiogenesis and is required for male fertility.</title>
        <authorList>
            <person name="Shimada K."/>
            <person name="Park S."/>
            <person name="Miyata H."/>
            <person name="Yu Z."/>
            <person name="Morohoshi A."/>
            <person name="Oura S."/>
            <person name="Matzuk M.M."/>
            <person name="Ikawa M."/>
        </authorList>
    </citation>
    <scope>INTERACTION WITH ARMC12</scope>
    <scope>TISSUE SPECIFICITY</scope>
</reference>
<protein>
    <recommendedName>
        <fullName>TBC1 domain family member 15</fullName>
    </recommendedName>
    <alternativeName>
        <fullName>GTPase-activating protein RAB7</fullName>
        <shortName>GAP for RAB7</shortName>
        <shortName>Rab7-GAP</shortName>
    </alternativeName>
</protein>
<sequence>MAAAGVVSGKIIYEQEGVYIHSSCGKTNDQDGLISGILRVLEKDAEVIVDWRPLDDALDSSSILYARKDSSSVVEWTQAPKERGHRGSEHLNSYEAEWDMVNTVSFKRKPHTNGDAPSHRNGKSKWSFLFSLTDLKSIKQNKEGMGWSYLVFCLKDDVVLPALHFHQGDSKLLIESLEKYVVLCESPQDKRTLLVNCQNKSLSQSFENLLDEPAYGLIQAGLLDRRKLLWAIHHWKKIKKDPYTATMIGFSKVTNYIFDSLRGSDPSTHQRPPSEMADFLSDAIPGLKINQQEEPGFEVITRIDLGERPVVQRREPVSLEEWTKNIDSEGRILNVDNMKQMIFRGGLSHALRKQAWKFLLGYFPWDSTKEERTQLQKQKTDEYFRMKLQWKSISQEQEKRNSRLRDYRSLIEKDVNRTDRTNKFYEGQDNPGLILLHDILMTYCMYDFDLGYVQGMSDLLSPLLYVMENEVDAFWCFASYMDQMHQNFEEQMQGMKTQLIQLSTLLRLLDSGFCSYLESQDSGYLYFCFRWLLIRFKREFSFLDILRLWEVMWTELPCTNFHLLLCCAILESEKQQIMEKHYGFNEILKHINELSMKIDVEDILCKAEAISLQMVKCKELPQAVCEILGLQGSEVTTPDSDVGEDENVVMTPCPTSAFQSNALPTLSASGARNDSPTQIPVSSDVCRLTPA</sequence>
<gene>
    <name type="primary">TBC1D15</name>
</gene>
<proteinExistence type="evidence at protein level"/>
<name>TBC15_HUMAN</name>
<feature type="initiator methionine" description="Removed" evidence="11">
    <location>
        <position position="1"/>
    </location>
</feature>
<feature type="chain" id="PRO_0000208042" description="TBC1 domain family member 15">
    <location>
        <begin position="2"/>
        <end position="691"/>
    </location>
</feature>
<feature type="domain" description="Rab-GAP TBC" evidence="3">
    <location>
        <begin position="346"/>
        <end position="556"/>
    </location>
</feature>
<feature type="modified residue" description="N-acetylalanine" evidence="11">
    <location>
        <position position="2"/>
    </location>
</feature>
<feature type="modified residue" description="Phosphoserine" evidence="16">
    <location>
        <position position="23"/>
    </location>
</feature>
<feature type="modified residue" description="Phosphoserine" evidence="10 12 15">
    <location>
        <position position="70"/>
    </location>
</feature>
<feature type="modified residue" description="Phosphoserine" evidence="2">
    <location>
        <position position="205"/>
    </location>
</feature>
<feature type="modified residue" description="Phosphoserine" evidence="15">
    <location>
        <position position="274"/>
    </location>
</feature>
<feature type="modified residue" description="Phosphoserine" evidence="16">
    <location>
        <position position="640"/>
    </location>
</feature>
<feature type="modified residue" description="Phosphoserine" evidence="9 10 13 14 15 16">
    <location>
        <position position="675"/>
    </location>
</feature>
<feature type="modified residue" description="Phosphothreonine" evidence="10">
    <location>
        <position position="689"/>
    </location>
</feature>
<feature type="splice variant" id="VSP_046402" description="In isoform 3." evidence="6">
    <original>MAAAGVVSGK</original>
    <variation>MCPGLYPYSSLLEYGRSM</variation>
    <location>
        <begin position="1"/>
        <end position="10"/>
    </location>
</feature>
<feature type="splice variant" id="VSP_023094" description="In isoform 2 and isoform 3." evidence="6 7">
    <location>
        <begin position="220"/>
        <end position="236"/>
    </location>
</feature>
<feature type="sequence conflict" description="In Ref. 1; BAB13971." evidence="8" ref="1">
    <original>R</original>
    <variation>G</variation>
    <location>
        <position position="52"/>
    </location>
</feature>
<feature type="sequence conflict" description="In Ref. 2; BAG60001." evidence="8" ref="2">
    <original>E</original>
    <variation>G</variation>
    <location>
        <position position="298"/>
    </location>
</feature>
<feature type="sequence conflict" description="In Ref. 2; BAG60001." evidence="8" ref="2">
    <original>Q</original>
    <variation>R</variation>
    <location>
        <position position="498"/>
    </location>
</feature>
<feature type="sequence conflict" description="In Ref. 3; AAH28352." evidence="8" ref="3">
    <original>S</original>
    <variation>G</variation>
    <location>
        <position position="541"/>
    </location>
</feature>
<feature type="sequence conflict" description="In Ref. 1; BAB13971." evidence="8" ref="1">
    <original>S</original>
    <variation>G</variation>
    <location>
        <position position="633"/>
    </location>
</feature>
<feature type="modified residue" description="Phosphoserine" evidence="12 14">
    <location sequence="Q8TC07-2">
        <position position="205"/>
    </location>
</feature>
<feature type="modified residue" description="Phosphoserine" evidence="12 14">
    <location sequence="Q8TC07-3">
        <position position="213"/>
    </location>
</feature>
<organism>
    <name type="scientific">Homo sapiens</name>
    <name type="common">Human</name>
    <dbReference type="NCBI Taxonomy" id="9606"/>
    <lineage>
        <taxon>Eukaryota</taxon>
        <taxon>Metazoa</taxon>
        <taxon>Chordata</taxon>
        <taxon>Craniata</taxon>
        <taxon>Vertebrata</taxon>
        <taxon>Euteleostomi</taxon>
        <taxon>Mammalia</taxon>
        <taxon>Eutheria</taxon>
        <taxon>Euarchontoglires</taxon>
        <taxon>Primates</taxon>
        <taxon>Haplorrhini</taxon>
        <taxon>Catarrhini</taxon>
        <taxon>Hominidae</taxon>
        <taxon>Homo</taxon>
    </lineage>
</organism>